<organism>
    <name type="scientific">Drosophila melanogaster</name>
    <name type="common">Fruit fly</name>
    <dbReference type="NCBI Taxonomy" id="7227"/>
    <lineage>
        <taxon>Eukaryota</taxon>
        <taxon>Metazoa</taxon>
        <taxon>Ecdysozoa</taxon>
        <taxon>Arthropoda</taxon>
        <taxon>Hexapoda</taxon>
        <taxon>Insecta</taxon>
        <taxon>Pterygota</taxon>
        <taxon>Neoptera</taxon>
        <taxon>Endopterygota</taxon>
        <taxon>Diptera</taxon>
        <taxon>Brachycera</taxon>
        <taxon>Muscomorpha</taxon>
        <taxon>Ephydroidea</taxon>
        <taxon>Drosophilidae</taxon>
        <taxon>Drosophila</taxon>
        <taxon>Sophophora</taxon>
    </lineage>
</organism>
<comment type="function">
    <text evidence="7 8">Binds as a ligand to a family of frizzled seven-transmembrane receptors and acts through a cascade of genes on the nucleus. Probable developmental protein. May be a signaling molecule which affects the development of discrete regions of tissues. Is likely to signal over only few cell diameters. May have a role in limb and CNS development; may be a downstream target of Dll that acts in the specification of these primordia.</text>
</comment>
<comment type="subunit">
    <text evidence="6">Interacts with porcupine (por).</text>
</comment>
<comment type="subcellular location">
    <subcellularLocation>
        <location>Secreted</location>
        <location>Extracellular space</location>
        <location>Extracellular matrix</location>
    </subcellularLocation>
</comment>
<comment type="tissue specificity">
    <text evidence="7 8">Dynamic expression pattern during embryogenesis. Expression is seen in the limb primordia of the head and thoracic segments, mesodermal and neurogenic regions.</text>
</comment>
<comment type="PTM">
    <text evidence="6">Glycosylated, glycosylation is stimulated by porcupine at the ER.</text>
</comment>
<comment type="PTM">
    <text evidence="1">Palmitoleoylated by porcupine. The lipid group functions as a sorting signal, targeting the ligand to polarized vesicles that transport Wnt5 to unique sites at the cell surface. Depalmitoleoylated by notum, leading to inhibit Wnt signaling pathway.</text>
</comment>
<comment type="similarity">
    <text evidence="9">Belongs to the Wnt family.</text>
</comment>
<evidence type="ECO:0000250" key="1">
    <source>
        <dbReference type="UniProtKB" id="P09615"/>
    </source>
</evidence>
<evidence type="ECO:0000250" key="2">
    <source>
        <dbReference type="UniProtKB" id="P28026"/>
    </source>
</evidence>
<evidence type="ECO:0000250" key="3">
    <source>
        <dbReference type="UniProtKB" id="P56704"/>
    </source>
</evidence>
<evidence type="ECO:0000255" key="4"/>
<evidence type="ECO:0000256" key="5">
    <source>
        <dbReference type="SAM" id="MobiDB-lite"/>
    </source>
</evidence>
<evidence type="ECO:0000269" key="6">
    <source>
    </source>
</evidence>
<evidence type="ECO:0000269" key="7">
    <source>
    </source>
</evidence>
<evidence type="ECO:0000269" key="8">
    <source>
    </source>
</evidence>
<evidence type="ECO:0000305" key="9"/>
<accession>P28466</accession>
<accession>Q01535</accession>
<accession>Q9VWT4</accession>
<keyword id="KW-0217">Developmental protein</keyword>
<keyword id="KW-1015">Disulfide bond</keyword>
<keyword id="KW-0272">Extracellular matrix</keyword>
<keyword id="KW-0325">Glycoprotein</keyword>
<keyword id="KW-0449">Lipoprotein</keyword>
<keyword id="KW-1185">Reference proteome</keyword>
<keyword id="KW-0964">Secreted</keyword>
<keyword id="KW-0732">Signal</keyword>
<keyword id="KW-0879">Wnt signaling pathway</keyword>
<gene>
    <name type="primary">Wnt5</name>
    <name type="synonym">Wnt-3</name>
    <name type="synonym">WNT-5</name>
    <name type="ORF">CG6407</name>
</gene>
<sequence>MSCYRKRHFLLWLLRAVCMLHLTARGAYATVGLQGVPTWIYLGLKSPFIEFGNQVEQLANSSIPLNMTKDEQANMHQEGLRKLGTFIKPVDLRDSETGFVKADLTKRLVFDRPNNITSRPIHPIQEEMDQKQIILLDEDTDENGLPASLTDEDRKFIVPMALKNISPDPRWAATTPSPSALQPNAKAISTIVPSPLAQVEGDPTSNIDDLKKHILFLHNMTKTNSNFESKFVKFPSLQKDKAKTSGAGGSPPNPKRPQRPIHQYSAPIAPPTPKVPAPDGGGVGGAAYNPGEQPIGGYYQNEELANNQSLLKPTDTDSHPAAGGSSHGQKNPSEPQVILLNETLSTETSIEADRSPSINQPKAGSPARTTKRPPCLRNPESPKCIRQRRREEQQRQRERDEWFRGQSQYMQPRFEPIIQTINNTKRFAVSIEIPDSFKVSSEGSDGELLSRVERSQPSISSSSSSSSSSSRKIMPDYIKVSMENNTSVTDYFKHDVVMTSADVASDREFLIKNMEEHGGAGSANSHHNDTTPTADAYSETIDLNPNNCYSAIGLSNSQKKQCVKHTSVMPAISRGARAAIQECQFQFKNRRWNCSTTNDETVFGPMTSLAAPEMAFIHALAAATVTSFIARACRDGQLASCSCSRGSRPKQLHDDWKWGGCGDNLEFAYKFATDFIDSREKETNRETRGVKRKREEINKNRMHSDDTNAFNIGIKRNKNVDAKNDTSLVVRNVRKSTEAENSHILNENFDQHLLELEQRITKEILTSKIDEEEMIKLQEKIKQEIVNTKFFKGEQQPRKKKRKNQRAAADAPAYPRNGIKESYKDGGILPRSTATVKARSLMNLHNNEAGRRAVIKKARITCKCHGVSGSCSLITCWQQLSSIREIGDYLREKYEGATKVKINKRGRLQIKDLQFKVPTAHDLIYLDESPDWCRNSYALHWPGTHGRVCHKNSSGLESCAILCCGRGYNTKNIIVNERCNCKFHWCCQVKCEVCTKVLEEHTCK</sequence>
<reference key="1">
    <citation type="journal article" date="1992" name="Development">
        <title>Isolation and expression of two novel Wnt/wingless gene homologues in Drosophila.</title>
        <authorList>
            <person name="Russell J."/>
            <person name="Gennissen A."/>
            <person name="Nusse R."/>
        </authorList>
    </citation>
    <scope>NUCLEOTIDE SEQUENCE [MRNA]</scope>
    <scope>FUNCTION</scope>
    <scope>TISSUE SPECIFICITY</scope>
    <source>
        <strain>Canton-S</strain>
        <tissue>Embryo</tissue>
    </source>
</reference>
<reference key="2">
    <citation type="journal article" date="1992" name="Dev. Biol.">
        <title>Cloning and characterization of a novel Drosophila Wnt gene, Dwnt-5, a putative downstream target of the homeobox gene distal-less.</title>
        <authorList>
            <person name="Eisenberg L.M."/>
            <person name="Ingham P.W."/>
            <person name="Brown A.M.C."/>
        </authorList>
    </citation>
    <scope>NUCLEOTIDE SEQUENCE [MRNA]</scope>
    <scope>FUNCTION</scope>
    <scope>TISSUE SPECIFICITY</scope>
    <source>
        <tissue>Embryo</tissue>
    </source>
</reference>
<reference key="3">
    <citation type="journal article" date="2000" name="Science">
        <title>The genome sequence of Drosophila melanogaster.</title>
        <authorList>
            <person name="Adams M.D."/>
            <person name="Celniker S.E."/>
            <person name="Holt R.A."/>
            <person name="Evans C.A."/>
            <person name="Gocayne J.D."/>
            <person name="Amanatides P.G."/>
            <person name="Scherer S.E."/>
            <person name="Li P.W."/>
            <person name="Hoskins R.A."/>
            <person name="Galle R.F."/>
            <person name="George R.A."/>
            <person name="Lewis S.E."/>
            <person name="Richards S."/>
            <person name="Ashburner M."/>
            <person name="Henderson S.N."/>
            <person name="Sutton G.G."/>
            <person name="Wortman J.R."/>
            <person name="Yandell M.D."/>
            <person name="Zhang Q."/>
            <person name="Chen L.X."/>
            <person name="Brandon R.C."/>
            <person name="Rogers Y.-H.C."/>
            <person name="Blazej R.G."/>
            <person name="Champe M."/>
            <person name="Pfeiffer B.D."/>
            <person name="Wan K.H."/>
            <person name="Doyle C."/>
            <person name="Baxter E.G."/>
            <person name="Helt G."/>
            <person name="Nelson C.R."/>
            <person name="Miklos G.L.G."/>
            <person name="Abril J.F."/>
            <person name="Agbayani A."/>
            <person name="An H.-J."/>
            <person name="Andrews-Pfannkoch C."/>
            <person name="Baldwin D."/>
            <person name="Ballew R.M."/>
            <person name="Basu A."/>
            <person name="Baxendale J."/>
            <person name="Bayraktaroglu L."/>
            <person name="Beasley E.M."/>
            <person name="Beeson K.Y."/>
            <person name="Benos P.V."/>
            <person name="Berman B.P."/>
            <person name="Bhandari D."/>
            <person name="Bolshakov S."/>
            <person name="Borkova D."/>
            <person name="Botchan M.R."/>
            <person name="Bouck J."/>
            <person name="Brokstein P."/>
            <person name="Brottier P."/>
            <person name="Burtis K.C."/>
            <person name="Busam D.A."/>
            <person name="Butler H."/>
            <person name="Cadieu E."/>
            <person name="Center A."/>
            <person name="Chandra I."/>
            <person name="Cherry J.M."/>
            <person name="Cawley S."/>
            <person name="Dahlke C."/>
            <person name="Davenport L.B."/>
            <person name="Davies P."/>
            <person name="de Pablos B."/>
            <person name="Delcher A."/>
            <person name="Deng Z."/>
            <person name="Mays A.D."/>
            <person name="Dew I."/>
            <person name="Dietz S.M."/>
            <person name="Dodson K."/>
            <person name="Doup L.E."/>
            <person name="Downes M."/>
            <person name="Dugan-Rocha S."/>
            <person name="Dunkov B.C."/>
            <person name="Dunn P."/>
            <person name="Durbin K.J."/>
            <person name="Evangelista C.C."/>
            <person name="Ferraz C."/>
            <person name="Ferriera S."/>
            <person name="Fleischmann W."/>
            <person name="Fosler C."/>
            <person name="Gabrielian A.E."/>
            <person name="Garg N.S."/>
            <person name="Gelbart W.M."/>
            <person name="Glasser K."/>
            <person name="Glodek A."/>
            <person name="Gong F."/>
            <person name="Gorrell J.H."/>
            <person name="Gu Z."/>
            <person name="Guan P."/>
            <person name="Harris M."/>
            <person name="Harris N.L."/>
            <person name="Harvey D.A."/>
            <person name="Heiman T.J."/>
            <person name="Hernandez J.R."/>
            <person name="Houck J."/>
            <person name="Hostin D."/>
            <person name="Houston K.A."/>
            <person name="Howland T.J."/>
            <person name="Wei M.-H."/>
            <person name="Ibegwam C."/>
            <person name="Jalali M."/>
            <person name="Kalush F."/>
            <person name="Karpen G.H."/>
            <person name="Ke Z."/>
            <person name="Kennison J.A."/>
            <person name="Ketchum K.A."/>
            <person name="Kimmel B.E."/>
            <person name="Kodira C.D."/>
            <person name="Kraft C.L."/>
            <person name="Kravitz S."/>
            <person name="Kulp D."/>
            <person name="Lai Z."/>
            <person name="Lasko P."/>
            <person name="Lei Y."/>
            <person name="Levitsky A.A."/>
            <person name="Li J.H."/>
            <person name="Li Z."/>
            <person name="Liang Y."/>
            <person name="Lin X."/>
            <person name="Liu X."/>
            <person name="Mattei B."/>
            <person name="McIntosh T.C."/>
            <person name="McLeod M.P."/>
            <person name="McPherson D."/>
            <person name="Merkulov G."/>
            <person name="Milshina N.V."/>
            <person name="Mobarry C."/>
            <person name="Morris J."/>
            <person name="Moshrefi A."/>
            <person name="Mount S.M."/>
            <person name="Moy M."/>
            <person name="Murphy B."/>
            <person name="Murphy L."/>
            <person name="Muzny D.M."/>
            <person name="Nelson D.L."/>
            <person name="Nelson D.R."/>
            <person name="Nelson K.A."/>
            <person name="Nixon K."/>
            <person name="Nusskern D.R."/>
            <person name="Pacleb J.M."/>
            <person name="Palazzolo M."/>
            <person name="Pittman G.S."/>
            <person name="Pan S."/>
            <person name="Pollard J."/>
            <person name="Puri V."/>
            <person name="Reese M.G."/>
            <person name="Reinert K."/>
            <person name="Remington K."/>
            <person name="Saunders R.D.C."/>
            <person name="Scheeler F."/>
            <person name="Shen H."/>
            <person name="Shue B.C."/>
            <person name="Siden-Kiamos I."/>
            <person name="Simpson M."/>
            <person name="Skupski M.P."/>
            <person name="Smith T.J."/>
            <person name="Spier E."/>
            <person name="Spradling A.C."/>
            <person name="Stapleton M."/>
            <person name="Strong R."/>
            <person name="Sun E."/>
            <person name="Svirskas R."/>
            <person name="Tector C."/>
            <person name="Turner R."/>
            <person name="Venter E."/>
            <person name="Wang A.H."/>
            <person name="Wang X."/>
            <person name="Wang Z.-Y."/>
            <person name="Wassarman D.A."/>
            <person name="Weinstock G.M."/>
            <person name="Weissenbach J."/>
            <person name="Williams S.M."/>
            <person name="Woodage T."/>
            <person name="Worley K.C."/>
            <person name="Wu D."/>
            <person name="Yang S."/>
            <person name="Yao Q.A."/>
            <person name="Ye J."/>
            <person name="Yeh R.-F."/>
            <person name="Zaveri J.S."/>
            <person name="Zhan M."/>
            <person name="Zhang G."/>
            <person name="Zhao Q."/>
            <person name="Zheng L."/>
            <person name="Zheng X.H."/>
            <person name="Zhong F.N."/>
            <person name="Zhong W."/>
            <person name="Zhou X."/>
            <person name="Zhu S.C."/>
            <person name="Zhu X."/>
            <person name="Smith H.O."/>
            <person name="Gibbs R.A."/>
            <person name="Myers E.W."/>
            <person name="Rubin G.M."/>
            <person name="Venter J.C."/>
        </authorList>
    </citation>
    <scope>NUCLEOTIDE SEQUENCE [LARGE SCALE GENOMIC DNA]</scope>
    <source>
        <strain>Berkeley</strain>
    </source>
</reference>
<reference key="4">
    <citation type="journal article" date="2002" name="Genome Biol.">
        <title>Annotation of the Drosophila melanogaster euchromatic genome: a systematic review.</title>
        <authorList>
            <person name="Misra S."/>
            <person name="Crosby M.A."/>
            <person name="Mungall C.J."/>
            <person name="Matthews B.B."/>
            <person name="Campbell K.S."/>
            <person name="Hradecky P."/>
            <person name="Huang Y."/>
            <person name="Kaminker J.S."/>
            <person name="Millburn G.H."/>
            <person name="Prochnik S.E."/>
            <person name="Smith C.D."/>
            <person name="Tupy J.L."/>
            <person name="Whitfield E.J."/>
            <person name="Bayraktaroglu L."/>
            <person name="Berman B.P."/>
            <person name="Bettencourt B.R."/>
            <person name="Celniker S.E."/>
            <person name="de Grey A.D.N.J."/>
            <person name="Drysdale R.A."/>
            <person name="Harris N.L."/>
            <person name="Richter J."/>
            <person name="Russo S."/>
            <person name="Schroeder A.J."/>
            <person name="Shu S.Q."/>
            <person name="Stapleton M."/>
            <person name="Yamada C."/>
            <person name="Ashburner M."/>
            <person name="Gelbart W.M."/>
            <person name="Rubin G.M."/>
            <person name="Lewis S.E."/>
        </authorList>
    </citation>
    <scope>GENOME REANNOTATION</scope>
    <source>
        <strain>Berkeley</strain>
    </source>
</reference>
<reference key="5">
    <citation type="submission" date="2003-08" db="EMBL/GenBank/DDBJ databases">
        <authorList>
            <person name="Stapleton M."/>
            <person name="Brokstein P."/>
            <person name="Hong L."/>
            <person name="Agbayani A."/>
            <person name="Carlson J.W."/>
            <person name="Champe M."/>
            <person name="Chavez C."/>
            <person name="Dorsett V."/>
            <person name="Dresnek D."/>
            <person name="Farfan D."/>
            <person name="Frise E."/>
            <person name="George R.A."/>
            <person name="Gonzalez M."/>
            <person name="Guarin H."/>
            <person name="Kronmiller B."/>
            <person name="Li P.W."/>
            <person name="Liao G."/>
            <person name="Miranda A."/>
            <person name="Mungall C.J."/>
            <person name="Nunoo J."/>
            <person name="Pacleb J.M."/>
            <person name="Paragas V."/>
            <person name="Park S."/>
            <person name="Patel S."/>
            <person name="Phouanenavong S."/>
            <person name="Wan K.H."/>
            <person name="Yu C."/>
            <person name="Lewis S.E."/>
            <person name="Rubin G.M."/>
            <person name="Celniker S.E."/>
        </authorList>
    </citation>
    <scope>NUCLEOTIDE SEQUENCE [LARGE SCALE MRNA]</scope>
    <source>
        <strain>Berkeley</strain>
        <tissue>Embryo</tissue>
    </source>
</reference>
<reference key="6">
    <citation type="journal article" date="2002" name="J. Biol. Chem.">
        <title>Drosophila segment polarity gene product porcupine stimulates the posttranslational N-glycosylation of wingless in the endoplasmic reticulum.</title>
        <authorList>
            <person name="Tanaka K."/>
            <person name="Kitagawa Y."/>
            <person name="Kadowaki T."/>
        </authorList>
    </citation>
    <scope>GLYCOSYLATION BY PORCUPINE</scope>
    <scope>INTERACTION WITH PORCUPINE</scope>
</reference>
<feature type="signal peptide" evidence="4">
    <location>
        <begin position="1"/>
        <end position="29"/>
    </location>
</feature>
<feature type="chain" id="PRO_0000041479" description="Protein Wnt-5">
    <location>
        <begin position="30"/>
        <end position="1004"/>
    </location>
</feature>
<feature type="region of interest" description="Disordered" evidence="5">
    <location>
        <begin position="238"/>
        <end position="298"/>
    </location>
</feature>
<feature type="region of interest" description="Disordered" evidence="5">
    <location>
        <begin position="310"/>
        <end position="407"/>
    </location>
</feature>
<feature type="region of interest" description="Disordered" evidence="5">
    <location>
        <begin position="438"/>
        <end position="472"/>
    </location>
</feature>
<feature type="region of interest" description="Disordered" evidence="5">
    <location>
        <begin position="790"/>
        <end position="822"/>
    </location>
</feature>
<feature type="compositionally biased region" description="Basic and acidic residues" evidence="5">
    <location>
        <begin position="389"/>
        <end position="403"/>
    </location>
</feature>
<feature type="compositionally biased region" description="Low complexity" evidence="5">
    <location>
        <begin position="458"/>
        <end position="470"/>
    </location>
</feature>
<feature type="lipid moiety-binding region" description="O-palmitoleoyl serine; by PORCN" evidence="3">
    <location>
        <position position="868"/>
    </location>
</feature>
<feature type="glycosylation site" description="N-linked (GlcNAc...) asparagine" evidence="4">
    <location>
        <position position="60"/>
    </location>
</feature>
<feature type="glycosylation site" description="N-linked (GlcNAc...) asparagine" evidence="4">
    <location>
        <position position="66"/>
    </location>
</feature>
<feature type="glycosylation site" description="N-linked (GlcNAc...) asparagine" evidence="4">
    <location>
        <position position="115"/>
    </location>
</feature>
<feature type="glycosylation site" description="N-linked (GlcNAc...) asparagine" evidence="4">
    <location>
        <position position="219"/>
    </location>
</feature>
<feature type="glycosylation site" description="N-linked (GlcNAc...) asparagine" evidence="4">
    <location>
        <position position="307"/>
    </location>
</feature>
<feature type="glycosylation site" description="N-linked (GlcNAc...) asparagine" evidence="4">
    <location>
        <position position="341"/>
    </location>
</feature>
<feature type="glycosylation site" description="N-linked (GlcNAc...) asparagine" evidence="4">
    <location>
        <position position="422"/>
    </location>
</feature>
<feature type="glycosylation site" description="N-linked (GlcNAc...) asparagine" evidence="4">
    <location>
        <position position="484"/>
    </location>
</feature>
<feature type="glycosylation site" description="N-linked (GlcNAc...) asparagine" evidence="4">
    <location>
        <position position="485"/>
    </location>
</feature>
<feature type="glycosylation site" description="N-linked (GlcNAc...) asparagine" evidence="4">
    <location>
        <position position="528"/>
    </location>
</feature>
<feature type="glycosylation site" description="N-linked (GlcNAc...) asparagine" evidence="4">
    <location>
        <position position="593"/>
    </location>
</feature>
<feature type="glycosylation site" description="N-linked (GlcNAc...) asparagine" evidence="4">
    <location>
        <position position="724"/>
    </location>
</feature>
<feature type="glycosylation site" description="N-linked (GlcNAc...) asparagine" evidence="4">
    <location>
        <position position="952"/>
    </location>
</feature>
<feature type="disulfide bond" evidence="2">
    <location>
        <begin position="583"/>
        <end position="594"/>
    </location>
</feature>
<feature type="disulfide bond" evidence="2">
    <location>
        <begin position="633"/>
        <end position="641"/>
    </location>
</feature>
<feature type="disulfide bond" evidence="2">
    <location>
        <begin position="643"/>
        <end position="661"/>
    </location>
</feature>
<feature type="disulfide bond" evidence="2">
    <location>
        <begin position="862"/>
        <end position="876"/>
    </location>
</feature>
<feature type="disulfide bond" evidence="2">
    <location>
        <begin position="864"/>
        <end position="871"/>
    </location>
</feature>
<feature type="disulfide bond" evidence="2">
    <location>
        <begin position="933"/>
        <end position="964"/>
    </location>
</feature>
<feature type="disulfide bond" evidence="2">
    <location>
        <begin position="949"/>
        <end position="959"/>
    </location>
</feature>
<feature type="disulfide bond" evidence="2">
    <location>
        <begin position="963"/>
        <end position="1003"/>
    </location>
</feature>
<feature type="disulfide bond" evidence="2">
    <location>
        <begin position="979"/>
        <end position="994"/>
    </location>
</feature>
<feature type="disulfide bond" evidence="2">
    <location>
        <begin position="981"/>
        <end position="991"/>
    </location>
</feature>
<feature type="disulfide bond" evidence="2">
    <location>
        <begin position="986"/>
        <end position="987"/>
    </location>
</feature>
<feature type="sequence conflict" description="In Ref. 1." evidence="9" ref="1">
    <original>G</original>
    <variation>GGGG</variation>
    <location>
        <position position="282"/>
    </location>
</feature>
<feature type="sequence conflict" description="In Ref. 1; CAA46002." evidence="9" ref="1">
    <original>D</original>
    <variation>E</variation>
    <location>
        <position position="317"/>
    </location>
</feature>
<feature type="sequence conflict" description="In Ref. 1." evidence="9" ref="1">
    <original>S</original>
    <variation>SSSS</variation>
    <location>
        <position position="470"/>
    </location>
</feature>
<feature type="sequence conflict" description="In Ref. 1 and 2." evidence="9" ref="1 2">
    <original>S</original>
    <variation>G</variation>
    <location>
        <position position="525"/>
    </location>
</feature>
<protein>
    <recommendedName>
        <fullName>Protein Wnt-5</fullName>
    </recommendedName>
    <alternativeName>
        <fullName>dWnt-3</fullName>
    </alternativeName>
    <alternativeName>
        <fullName>dWnt-5</fullName>
    </alternativeName>
</protein>
<dbReference type="EMBL" id="X64736">
    <property type="protein sequence ID" value="CAA46002.1"/>
    <property type="molecule type" value="mRNA"/>
</dbReference>
<dbReference type="EMBL" id="M97450">
    <property type="protein sequence ID" value="AAA29020.1"/>
    <property type="molecule type" value="mRNA"/>
</dbReference>
<dbReference type="EMBL" id="AE014298">
    <property type="protein sequence ID" value="AAF48853.1"/>
    <property type="molecule type" value="Genomic_DNA"/>
</dbReference>
<dbReference type="EMBL" id="BT010268">
    <property type="protein sequence ID" value="AAQ23586.1"/>
    <property type="molecule type" value="mRNA"/>
</dbReference>
<dbReference type="PIR" id="A48821">
    <property type="entry name" value="A48821"/>
</dbReference>
<dbReference type="RefSeq" id="NP_001285407.1">
    <property type="nucleotide sequence ID" value="NM_001298478.1"/>
</dbReference>
<dbReference type="RefSeq" id="NP_476924.1">
    <property type="nucleotide sequence ID" value="NM_057576.5"/>
</dbReference>
<dbReference type="SMR" id="P28466"/>
<dbReference type="BioGRID" id="59151">
    <property type="interactions" value="17"/>
</dbReference>
<dbReference type="DIP" id="DIP-22455N"/>
<dbReference type="FunCoup" id="P28466">
    <property type="interactions" value="214"/>
</dbReference>
<dbReference type="IntAct" id="P28466">
    <property type="interactions" value="5"/>
</dbReference>
<dbReference type="MINT" id="P28466"/>
<dbReference type="STRING" id="7227.FBpp0309792"/>
<dbReference type="GlyCosmos" id="P28466">
    <property type="glycosylation" value="13 sites, No reported glycans"/>
</dbReference>
<dbReference type="GlyGen" id="P28466">
    <property type="glycosylation" value="13 sites"/>
</dbReference>
<dbReference type="PaxDb" id="7227-FBpp0074394"/>
<dbReference type="DNASU" id="32838"/>
<dbReference type="EnsemblMetazoa" id="FBtr0074623">
    <property type="protein sequence ID" value="FBpp0074394"/>
    <property type="gene ID" value="FBgn0010194"/>
</dbReference>
<dbReference type="EnsemblMetazoa" id="FBtr0343046">
    <property type="protein sequence ID" value="FBpp0309792"/>
    <property type="gene ID" value="FBgn0010194"/>
</dbReference>
<dbReference type="GeneID" id="32838"/>
<dbReference type="KEGG" id="dme:Dmel_CG6407"/>
<dbReference type="AGR" id="FB:FBgn0010194"/>
<dbReference type="CTD" id="32838"/>
<dbReference type="FlyBase" id="FBgn0010194">
    <property type="gene designation" value="Wnt5"/>
</dbReference>
<dbReference type="VEuPathDB" id="VectorBase:FBgn0010194"/>
<dbReference type="eggNOG" id="KOG3913">
    <property type="taxonomic scope" value="Eukaryota"/>
</dbReference>
<dbReference type="HOGENOM" id="CLU_303411_0_0_1"/>
<dbReference type="InParanoid" id="P28466"/>
<dbReference type="OMA" id="YGQKKLC"/>
<dbReference type="OrthoDB" id="5945655at2759"/>
<dbReference type="PhylomeDB" id="P28466"/>
<dbReference type="Reactome" id="R-DME-201681">
    <property type="pathway name" value="TCF dependent signaling in response to WNT"/>
</dbReference>
<dbReference type="Reactome" id="R-DME-3238698">
    <property type="pathway name" value="WNT ligand biogenesis and trafficking"/>
</dbReference>
<dbReference type="Reactome" id="R-DME-4086398">
    <property type="pathway name" value="Ca2+ pathway"/>
</dbReference>
<dbReference type="Reactome" id="R-DME-4086400">
    <property type="pathway name" value="PCP/CE pathway"/>
</dbReference>
<dbReference type="Reactome" id="R-DME-4608870">
    <property type="pathway name" value="Asymmetric localization of PCP proteins"/>
</dbReference>
<dbReference type="Reactome" id="R-DME-5099900">
    <property type="pathway name" value="WNT5A-dependent internalization of FZD4"/>
</dbReference>
<dbReference type="Reactome" id="R-DME-5140745">
    <property type="pathway name" value="WNT5A-dependent internalization of FZD2, FZD5 and ROR2"/>
</dbReference>
<dbReference type="SignaLink" id="P28466"/>
<dbReference type="BioGRID-ORCS" id="32838">
    <property type="hits" value="0 hits in 3 CRISPR screens"/>
</dbReference>
<dbReference type="GenomeRNAi" id="32838"/>
<dbReference type="PRO" id="PR:P28466"/>
<dbReference type="Proteomes" id="UP000000803">
    <property type="component" value="Chromosome X"/>
</dbReference>
<dbReference type="Bgee" id="FBgn0010194">
    <property type="expression patterns" value="Expressed in T neuron T5b (Drosophila) in embryonic/larval optic lobe (Drosophila) and 87 other cell types or tissues"/>
</dbReference>
<dbReference type="ExpressionAtlas" id="P28466">
    <property type="expression patterns" value="baseline and differential"/>
</dbReference>
<dbReference type="GO" id="GO:0030425">
    <property type="term" value="C:dendrite"/>
    <property type="evidence" value="ECO:0000314"/>
    <property type="project" value="FlyBase"/>
</dbReference>
<dbReference type="GO" id="GO:0005576">
    <property type="term" value="C:extracellular region"/>
    <property type="evidence" value="ECO:0000314"/>
    <property type="project" value="FlyBase"/>
</dbReference>
<dbReference type="GO" id="GO:0005615">
    <property type="term" value="C:extracellular space"/>
    <property type="evidence" value="ECO:0000318"/>
    <property type="project" value="GO_Central"/>
</dbReference>
<dbReference type="GO" id="GO:0005125">
    <property type="term" value="F:cytokine activity"/>
    <property type="evidence" value="ECO:0000318"/>
    <property type="project" value="GO_Central"/>
</dbReference>
<dbReference type="GO" id="GO:0005109">
    <property type="term" value="F:frizzled binding"/>
    <property type="evidence" value="ECO:0000318"/>
    <property type="project" value="GO_Central"/>
</dbReference>
<dbReference type="GO" id="GO:0048018">
    <property type="term" value="F:receptor ligand activity"/>
    <property type="evidence" value="ECO:0000315"/>
    <property type="project" value="FlyBase"/>
</dbReference>
<dbReference type="GO" id="GO:0005102">
    <property type="term" value="F:signaling receptor binding"/>
    <property type="evidence" value="ECO:0000353"/>
    <property type="project" value="FlyBase"/>
</dbReference>
<dbReference type="GO" id="GO:0048675">
    <property type="term" value="P:axon extension"/>
    <property type="evidence" value="ECO:0000315"/>
    <property type="project" value="FlyBase"/>
</dbReference>
<dbReference type="GO" id="GO:0007411">
    <property type="term" value="P:axon guidance"/>
    <property type="evidence" value="ECO:0000315"/>
    <property type="project" value="FlyBase"/>
</dbReference>
<dbReference type="GO" id="GO:0060070">
    <property type="term" value="P:canonical Wnt signaling pathway"/>
    <property type="evidence" value="ECO:0000318"/>
    <property type="project" value="GO_Central"/>
</dbReference>
<dbReference type="GO" id="GO:0045165">
    <property type="term" value="P:cell fate commitment"/>
    <property type="evidence" value="ECO:0000318"/>
    <property type="project" value="GO_Central"/>
</dbReference>
<dbReference type="GO" id="GO:0061643">
    <property type="term" value="P:chemorepulsion of axon"/>
    <property type="evidence" value="ECO:0000315"/>
    <property type="project" value="FlyBase"/>
</dbReference>
<dbReference type="GO" id="GO:0070983">
    <property type="term" value="P:dendrite guidance"/>
    <property type="evidence" value="ECO:0000315"/>
    <property type="project" value="FlyBase"/>
</dbReference>
<dbReference type="GO" id="GO:0016204">
    <property type="term" value="P:determination of muscle attachment site"/>
    <property type="evidence" value="ECO:0000315"/>
    <property type="project" value="FlyBase"/>
</dbReference>
<dbReference type="GO" id="GO:0050919">
    <property type="term" value="P:negative chemotaxis"/>
    <property type="evidence" value="ECO:0000315"/>
    <property type="project" value="FlyBase"/>
</dbReference>
<dbReference type="GO" id="GO:0030182">
    <property type="term" value="P:neuron differentiation"/>
    <property type="evidence" value="ECO:0000318"/>
    <property type="project" value="GO_Central"/>
</dbReference>
<dbReference type="GO" id="GO:0045773">
    <property type="term" value="P:positive regulation of axon extension"/>
    <property type="evidence" value="ECO:0000316"/>
    <property type="project" value="FlyBase"/>
</dbReference>
<dbReference type="GO" id="GO:1902669">
    <property type="term" value="P:positive regulation of axon guidance"/>
    <property type="evidence" value="ECO:0000315"/>
    <property type="project" value="FlyBase"/>
</dbReference>
<dbReference type="GO" id="GO:0007435">
    <property type="term" value="P:salivary gland morphogenesis"/>
    <property type="evidence" value="ECO:0000315"/>
    <property type="project" value="FlyBase"/>
</dbReference>
<dbReference type="GO" id="GO:0016055">
    <property type="term" value="P:Wnt signaling pathway"/>
    <property type="evidence" value="ECO:0000250"/>
    <property type="project" value="FlyBase"/>
</dbReference>
<dbReference type="CDD" id="cd19337">
    <property type="entry name" value="Wnt_Wnt5"/>
    <property type="match status" value="1"/>
</dbReference>
<dbReference type="FunFam" id="3.30.2460.20:FF:000001">
    <property type="entry name" value="Wnt homolog"/>
    <property type="match status" value="1"/>
</dbReference>
<dbReference type="Gene3D" id="3.30.2460.20">
    <property type="match status" value="1"/>
</dbReference>
<dbReference type="InterPro" id="IPR005817">
    <property type="entry name" value="Wnt"/>
</dbReference>
<dbReference type="InterPro" id="IPR043158">
    <property type="entry name" value="Wnt_C"/>
</dbReference>
<dbReference type="InterPro" id="IPR018161">
    <property type="entry name" value="Wnt_CS"/>
</dbReference>
<dbReference type="PANTHER" id="PTHR12027:SF77">
    <property type="entry name" value="PROTEIN WNT-5"/>
    <property type="match status" value="1"/>
</dbReference>
<dbReference type="PANTHER" id="PTHR12027">
    <property type="entry name" value="WNT RELATED"/>
    <property type="match status" value="1"/>
</dbReference>
<dbReference type="Pfam" id="PF00110">
    <property type="entry name" value="wnt"/>
    <property type="match status" value="2"/>
</dbReference>
<dbReference type="PRINTS" id="PR01349">
    <property type="entry name" value="WNTPROTEIN"/>
</dbReference>
<dbReference type="SMART" id="SM00097">
    <property type="entry name" value="WNT1"/>
    <property type="match status" value="1"/>
</dbReference>
<dbReference type="PROSITE" id="PS00246">
    <property type="entry name" value="WNT1"/>
    <property type="match status" value="1"/>
</dbReference>
<proteinExistence type="evidence at protein level"/>
<name>WNT5_DROME</name>